<comment type="function">
    <text evidence="1">Involved in nonsense-mediated decay (NMD) of mRNAs containing premature stop codons. Probable component of kinase complex containing nonC and recruited to stalled ribosomes (By similarity).</text>
</comment>
<comment type="similarity">
    <text evidence="4">Belongs to the SMG8 family.</text>
</comment>
<comment type="sequence caution" evidence="4">
    <conflict type="erroneous initiation">
        <sequence resource="EMBL-CDS" id="ACH92273"/>
    </conflict>
</comment>
<dbReference type="EMBL" id="AE014134">
    <property type="protein sequence ID" value="AAF53005.1"/>
    <property type="molecule type" value="Genomic_DNA"/>
</dbReference>
<dbReference type="EMBL" id="AY084211">
    <property type="protein sequence ID" value="AAL89949.1"/>
    <property type="molecule type" value="mRNA"/>
</dbReference>
<dbReference type="EMBL" id="BT044208">
    <property type="protein sequence ID" value="ACH92273.1"/>
    <property type="status" value="ALT_INIT"/>
    <property type="molecule type" value="mRNA"/>
</dbReference>
<dbReference type="RefSeq" id="NP_609449.1">
    <property type="nucleotide sequence ID" value="NM_135605.3"/>
</dbReference>
<dbReference type="SMR" id="Q9VKQ6"/>
<dbReference type="FunCoup" id="Q9VKQ6">
    <property type="interactions" value="2902"/>
</dbReference>
<dbReference type="STRING" id="7227.FBpp0079708"/>
<dbReference type="PaxDb" id="7227-FBpp0079708"/>
<dbReference type="DNASU" id="34484"/>
<dbReference type="EnsemblMetazoa" id="FBtr0080119">
    <property type="protein sequence ID" value="FBpp0079708"/>
    <property type="gene ID" value="FBgn0032296"/>
</dbReference>
<dbReference type="GeneID" id="34484"/>
<dbReference type="KEGG" id="dme:Dmel_CG6729"/>
<dbReference type="UCSC" id="CG6729-RA">
    <property type="organism name" value="d. melanogaster"/>
</dbReference>
<dbReference type="AGR" id="FB:FBgn0032296"/>
<dbReference type="FlyBase" id="FBgn0032296">
    <property type="gene designation" value="CG6729"/>
</dbReference>
<dbReference type="VEuPathDB" id="VectorBase:FBgn0032296"/>
<dbReference type="eggNOG" id="KOG3692">
    <property type="taxonomic scope" value="Eukaryota"/>
</dbReference>
<dbReference type="GeneTree" id="ENSGT00390000018533"/>
<dbReference type="HOGENOM" id="CLU_008116_0_0_1"/>
<dbReference type="InParanoid" id="Q9VKQ6"/>
<dbReference type="OMA" id="HVCHIVV"/>
<dbReference type="OrthoDB" id="63589at2759"/>
<dbReference type="PhylomeDB" id="Q9VKQ6"/>
<dbReference type="Reactome" id="R-DME-975957">
    <property type="pathway name" value="Nonsense Mediated Decay (NMD) enhanced by the Exon Junction Complex (EJC)"/>
</dbReference>
<dbReference type="BioGRID-ORCS" id="34484">
    <property type="hits" value="0 hits in 1 CRISPR screen"/>
</dbReference>
<dbReference type="ChiTaRS" id="CG6729">
    <property type="organism name" value="fly"/>
</dbReference>
<dbReference type="GenomeRNAi" id="34484"/>
<dbReference type="PRO" id="PR:Q9VKQ6"/>
<dbReference type="Proteomes" id="UP000000803">
    <property type="component" value="Chromosome 2L"/>
</dbReference>
<dbReference type="Bgee" id="FBgn0032296">
    <property type="expression patterns" value="Expressed in adult Malpighian tubule (Drosophila) and 41 other cell types or tissues"/>
</dbReference>
<dbReference type="GO" id="GO:0000184">
    <property type="term" value="P:nuclear-transcribed mRNA catabolic process, nonsense-mediated decay"/>
    <property type="evidence" value="ECO:0000250"/>
    <property type="project" value="UniProtKB"/>
</dbReference>
<dbReference type="InterPro" id="IPR019354">
    <property type="entry name" value="SMG8-like"/>
</dbReference>
<dbReference type="PANTHER" id="PTHR13091">
    <property type="entry name" value="AMPLIFIED IN BREAST CANCER 2-RELATED"/>
    <property type="match status" value="1"/>
</dbReference>
<dbReference type="PANTHER" id="PTHR13091:SF0">
    <property type="entry name" value="NONSENSE-MEDIATED MRNA DECAY FACTOR SMG8"/>
    <property type="match status" value="1"/>
</dbReference>
<dbReference type="Pfam" id="PF10220">
    <property type="entry name" value="Smg8_Smg9"/>
    <property type="match status" value="1"/>
</dbReference>
<proteinExistence type="evidence at transcript level"/>
<sequence>MLDDYYTWTYPDIPENVAQELLQLNGSLVVVGIVGRSDCDQANKMVAFGMEPPSEHTPKDGQMQCYYKPGTSILLLHFESTYDAEIAGQMIDVCIEDVDTPFDIDSFFEGIRCRFVRMMLLALHVCHIVVYVETGQTFDPTLITVFQLAKFAREQHLMQFLPQMLRETPAARMSERTRLCTPRILFLFENFPSDEPKTRECVSTYEFQMEDCIYELLRHHNIVTNSSSNSLVALPNNKQFVFFNAHEELREDTLMKAVECLNETMYKPDLKEEEEDLEILALAPFDGFVKPFALPVDEKEWDNQQYKKDHTVWNFLERHVQDALMGCFEAGSFKQHAQQGTFQLLNSKEWHDCMATMHTLLVENTKDPNLETSNEEYKNFLKNFDESLNYEKKFWAHLCELGLKKGIAAYKNAAPENYGSATHRQLLAEATLAFEEEGRGPQAQAALAKLASICHKHWQDGRQQCEQLSLRSHPCTLPKKVPHEKHNSGVIHISSCNCGRTQGRREDPFNLRQANYEFYEHIAQMCNLCVKVKQYQFPIFEPSVSDYRAAAFEAAFPLLNNGKSGAPQDEDAEEDEAEEEEGQEQEQPTEEQLQNTASNCCSQPLSPTFGSDLNMSIAGFGASLKESQASSEQLLNSEQNTTSSGTSSADTDNELVVELQEPAKKEAREDAGPAHAVSTSTTEYLPGLVHTVSNFGLLPLFPSWSLACVGPSSIYSHNTGLQEHFQSGFLSGANFLLPWDVQLRLVHAPKQQYQQQHHGKKQQRWKKQGDRLSLKIFVGMEYECSRGHRFMMCAPDRVLRGGADIERETCSMVVHNNMPLYYPCPCRSQNNFLAQLMRIHVVTPKAPVNIIVDPKVCVGRYTFTMGSIVPPRLSQSAYWIIRLPYVYQGDDVLIAPPEQLDPGYPLTGGYLLPGMFGVVETDPTLDLNEPDKMGASAAGNFTRI</sequence>
<protein>
    <recommendedName>
        <fullName evidence="2">Nonsense-mediated mRNA decay factor SMG8</fullName>
    </recommendedName>
    <alternativeName>
        <fullName>Protein smg-8 homolog</fullName>
    </alternativeName>
</protein>
<feature type="chain" id="PRO_0000304977" description="Nonsense-mediated mRNA decay factor SMG8">
    <location>
        <begin position="1"/>
        <end position="944"/>
    </location>
</feature>
<feature type="region of interest" description="Disordered" evidence="3">
    <location>
        <begin position="559"/>
        <end position="601"/>
    </location>
</feature>
<feature type="region of interest" description="Disordered" evidence="3">
    <location>
        <begin position="629"/>
        <end position="654"/>
    </location>
</feature>
<feature type="compositionally biased region" description="Acidic residues" evidence="3">
    <location>
        <begin position="568"/>
        <end position="589"/>
    </location>
</feature>
<feature type="compositionally biased region" description="Polar residues" evidence="3">
    <location>
        <begin position="629"/>
        <end position="640"/>
    </location>
</feature>
<feature type="compositionally biased region" description="Low complexity" evidence="3">
    <location>
        <begin position="641"/>
        <end position="650"/>
    </location>
</feature>
<feature type="sequence conflict" description="In Ref. 3; AAL89949." evidence="4" ref="3">
    <original>L</original>
    <variation>Q</variation>
    <location>
        <position position="477"/>
    </location>
</feature>
<reference key="1">
    <citation type="journal article" date="2000" name="Science">
        <title>The genome sequence of Drosophila melanogaster.</title>
        <authorList>
            <person name="Adams M.D."/>
            <person name="Celniker S.E."/>
            <person name="Holt R.A."/>
            <person name="Evans C.A."/>
            <person name="Gocayne J.D."/>
            <person name="Amanatides P.G."/>
            <person name="Scherer S.E."/>
            <person name="Li P.W."/>
            <person name="Hoskins R.A."/>
            <person name="Galle R.F."/>
            <person name="George R.A."/>
            <person name="Lewis S.E."/>
            <person name="Richards S."/>
            <person name="Ashburner M."/>
            <person name="Henderson S.N."/>
            <person name="Sutton G.G."/>
            <person name="Wortman J.R."/>
            <person name="Yandell M.D."/>
            <person name="Zhang Q."/>
            <person name="Chen L.X."/>
            <person name="Brandon R.C."/>
            <person name="Rogers Y.-H.C."/>
            <person name="Blazej R.G."/>
            <person name="Champe M."/>
            <person name="Pfeiffer B.D."/>
            <person name="Wan K.H."/>
            <person name="Doyle C."/>
            <person name="Baxter E.G."/>
            <person name="Helt G."/>
            <person name="Nelson C.R."/>
            <person name="Miklos G.L.G."/>
            <person name="Abril J.F."/>
            <person name="Agbayani A."/>
            <person name="An H.-J."/>
            <person name="Andrews-Pfannkoch C."/>
            <person name="Baldwin D."/>
            <person name="Ballew R.M."/>
            <person name="Basu A."/>
            <person name="Baxendale J."/>
            <person name="Bayraktaroglu L."/>
            <person name="Beasley E.M."/>
            <person name="Beeson K.Y."/>
            <person name="Benos P.V."/>
            <person name="Berman B.P."/>
            <person name="Bhandari D."/>
            <person name="Bolshakov S."/>
            <person name="Borkova D."/>
            <person name="Botchan M.R."/>
            <person name="Bouck J."/>
            <person name="Brokstein P."/>
            <person name="Brottier P."/>
            <person name="Burtis K.C."/>
            <person name="Busam D.A."/>
            <person name="Butler H."/>
            <person name="Cadieu E."/>
            <person name="Center A."/>
            <person name="Chandra I."/>
            <person name="Cherry J.M."/>
            <person name="Cawley S."/>
            <person name="Dahlke C."/>
            <person name="Davenport L.B."/>
            <person name="Davies P."/>
            <person name="de Pablos B."/>
            <person name="Delcher A."/>
            <person name="Deng Z."/>
            <person name="Mays A.D."/>
            <person name="Dew I."/>
            <person name="Dietz S.M."/>
            <person name="Dodson K."/>
            <person name="Doup L.E."/>
            <person name="Downes M."/>
            <person name="Dugan-Rocha S."/>
            <person name="Dunkov B.C."/>
            <person name="Dunn P."/>
            <person name="Durbin K.J."/>
            <person name="Evangelista C.C."/>
            <person name="Ferraz C."/>
            <person name="Ferriera S."/>
            <person name="Fleischmann W."/>
            <person name="Fosler C."/>
            <person name="Gabrielian A.E."/>
            <person name="Garg N.S."/>
            <person name="Gelbart W.M."/>
            <person name="Glasser K."/>
            <person name="Glodek A."/>
            <person name="Gong F."/>
            <person name="Gorrell J.H."/>
            <person name="Gu Z."/>
            <person name="Guan P."/>
            <person name="Harris M."/>
            <person name="Harris N.L."/>
            <person name="Harvey D.A."/>
            <person name="Heiman T.J."/>
            <person name="Hernandez J.R."/>
            <person name="Houck J."/>
            <person name="Hostin D."/>
            <person name="Houston K.A."/>
            <person name="Howland T.J."/>
            <person name="Wei M.-H."/>
            <person name="Ibegwam C."/>
            <person name="Jalali M."/>
            <person name="Kalush F."/>
            <person name="Karpen G.H."/>
            <person name="Ke Z."/>
            <person name="Kennison J.A."/>
            <person name="Ketchum K.A."/>
            <person name="Kimmel B.E."/>
            <person name="Kodira C.D."/>
            <person name="Kraft C.L."/>
            <person name="Kravitz S."/>
            <person name="Kulp D."/>
            <person name="Lai Z."/>
            <person name="Lasko P."/>
            <person name="Lei Y."/>
            <person name="Levitsky A.A."/>
            <person name="Li J.H."/>
            <person name="Li Z."/>
            <person name="Liang Y."/>
            <person name="Lin X."/>
            <person name="Liu X."/>
            <person name="Mattei B."/>
            <person name="McIntosh T.C."/>
            <person name="McLeod M.P."/>
            <person name="McPherson D."/>
            <person name="Merkulov G."/>
            <person name="Milshina N.V."/>
            <person name="Mobarry C."/>
            <person name="Morris J."/>
            <person name="Moshrefi A."/>
            <person name="Mount S.M."/>
            <person name="Moy M."/>
            <person name="Murphy B."/>
            <person name="Murphy L."/>
            <person name="Muzny D.M."/>
            <person name="Nelson D.L."/>
            <person name="Nelson D.R."/>
            <person name="Nelson K.A."/>
            <person name="Nixon K."/>
            <person name="Nusskern D.R."/>
            <person name="Pacleb J.M."/>
            <person name="Palazzolo M."/>
            <person name="Pittman G.S."/>
            <person name="Pan S."/>
            <person name="Pollard J."/>
            <person name="Puri V."/>
            <person name="Reese M.G."/>
            <person name="Reinert K."/>
            <person name="Remington K."/>
            <person name="Saunders R.D.C."/>
            <person name="Scheeler F."/>
            <person name="Shen H."/>
            <person name="Shue B.C."/>
            <person name="Siden-Kiamos I."/>
            <person name="Simpson M."/>
            <person name="Skupski M.P."/>
            <person name="Smith T.J."/>
            <person name="Spier E."/>
            <person name="Spradling A.C."/>
            <person name="Stapleton M."/>
            <person name="Strong R."/>
            <person name="Sun E."/>
            <person name="Svirskas R."/>
            <person name="Tector C."/>
            <person name="Turner R."/>
            <person name="Venter E."/>
            <person name="Wang A.H."/>
            <person name="Wang X."/>
            <person name="Wang Z.-Y."/>
            <person name="Wassarman D.A."/>
            <person name="Weinstock G.M."/>
            <person name="Weissenbach J."/>
            <person name="Williams S.M."/>
            <person name="Woodage T."/>
            <person name="Worley K.C."/>
            <person name="Wu D."/>
            <person name="Yang S."/>
            <person name="Yao Q.A."/>
            <person name="Ye J."/>
            <person name="Yeh R.-F."/>
            <person name="Zaveri J.S."/>
            <person name="Zhan M."/>
            <person name="Zhang G."/>
            <person name="Zhao Q."/>
            <person name="Zheng L."/>
            <person name="Zheng X.H."/>
            <person name="Zhong F.N."/>
            <person name="Zhong W."/>
            <person name="Zhou X."/>
            <person name="Zhu S.C."/>
            <person name="Zhu X."/>
            <person name="Smith H.O."/>
            <person name="Gibbs R.A."/>
            <person name="Myers E.W."/>
            <person name="Rubin G.M."/>
            <person name="Venter J.C."/>
        </authorList>
    </citation>
    <scope>NUCLEOTIDE SEQUENCE [LARGE SCALE GENOMIC DNA]</scope>
    <source>
        <strain>Berkeley</strain>
    </source>
</reference>
<reference key="2">
    <citation type="journal article" date="2002" name="Genome Biol.">
        <title>Annotation of the Drosophila melanogaster euchromatic genome: a systematic review.</title>
        <authorList>
            <person name="Misra S."/>
            <person name="Crosby M.A."/>
            <person name="Mungall C.J."/>
            <person name="Matthews B.B."/>
            <person name="Campbell K.S."/>
            <person name="Hradecky P."/>
            <person name="Huang Y."/>
            <person name="Kaminker J.S."/>
            <person name="Millburn G.H."/>
            <person name="Prochnik S.E."/>
            <person name="Smith C.D."/>
            <person name="Tupy J.L."/>
            <person name="Whitfield E.J."/>
            <person name="Bayraktaroglu L."/>
            <person name="Berman B.P."/>
            <person name="Bettencourt B.R."/>
            <person name="Celniker S.E."/>
            <person name="de Grey A.D.N.J."/>
            <person name="Drysdale R.A."/>
            <person name="Harris N.L."/>
            <person name="Richter J."/>
            <person name="Russo S."/>
            <person name="Schroeder A.J."/>
            <person name="Shu S.Q."/>
            <person name="Stapleton M."/>
            <person name="Yamada C."/>
            <person name="Ashburner M."/>
            <person name="Gelbart W.M."/>
            <person name="Rubin G.M."/>
            <person name="Lewis S.E."/>
        </authorList>
    </citation>
    <scope>GENOME REANNOTATION</scope>
    <source>
        <strain>Berkeley</strain>
    </source>
</reference>
<reference key="3">
    <citation type="journal article" date="2002" name="Genome Biol.">
        <title>A Drosophila full-length cDNA resource.</title>
        <authorList>
            <person name="Stapleton M."/>
            <person name="Carlson J.W."/>
            <person name="Brokstein P."/>
            <person name="Yu C."/>
            <person name="Champe M."/>
            <person name="George R.A."/>
            <person name="Guarin H."/>
            <person name="Kronmiller B."/>
            <person name="Pacleb J.M."/>
            <person name="Park S."/>
            <person name="Wan K.H."/>
            <person name="Rubin G.M."/>
            <person name="Celniker S.E."/>
        </authorList>
    </citation>
    <scope>NUCLEOTIDE SEQUENCE [LARGE SCALE MRNA]</scope>
    <source>
        <strain>Berkeley</strain>
        <tissue>Embryo</tissue>
    </source>
</reference>
<reference key="4">
    <citation type="submission" date="2008-09" db="EMBL/GenBank/DDBJ databases">
        <authorList>
            <person name="Carlson J.W."/>
            <person name="Booth B."/>
            <person name="Frise E."/>
            <person name="Park S."/>
            <person name="Wan K.H."/>
            <person name="Yu C."/>
            <person name="Celniker S.E."/>
        </authorList>
    </citation>
    <scope>NUCLEOTIDE SEQUENCE [LARGE SCALE MRNA]</scope>
    <source>
        <strain>Berkeley</strain>
    </source>
</reference>
<accession>Q9VKQ6</accession>
<accession>B5RIT4</accession>
<accession>Q8T4F6</accession>
<name>SMG8_DROME</name>
<keyword id="KW-0866">Nonsense-mediated mRNA decay</keyword>
<keyword id="KW-1185">Reference proteome</keyword>
<organism>
    <name type="scientific">Drosophila melanogaster</name>
    <name type="common">Fruit fly</name>
    <dbReference type="NCBI Taxonomy" id="7227"/>
    <lineage>
        <taxon>Eukaryota</taxon>
        <taxon>Metazoa</taxon>
        <taxon>Ecdysozoa</taxon>
        <taxon>Arthropoda</taxon>
        <taxon>Hexapoda</taxon>
        <taxon>Insecta</taxon>
        <taxon>Pterygota</taxon>
        <taxon>Neoptera</taxon>
        <taxon>Endopterygota</taxon>
        <taxon>Diptera</taxon>
        <taxon>Brachycera</taxon>
        <taxon>Muscomorpha</taxon>
        <taxon>Ephydroidea</taxon>
        <taxon>Drosophilidae</taxon>
        <taxon>Drosophila</taxon>
        <taxon>Sophophora</taxon>
    </lineage>
</organism>
<evidence type="ECO:0000250" key="1"/>
<evidence type="ECO:0000250" key="2">
    <source>
        <dbReference type="UniProtKB" id="Q8ND04"/>
    </source>
</evidence>
<evidence type="ECO:0000256" key="3">
    <source>
        <dbReference type="SAM" id="MobiDB-lite"/>
    </source>
</evidence>
<evidence type="ECO:0000305" key="4"/>
<gene>
    <name type="ORF">CG6729</name>
</gene>